<dbReference type="PIR" id="F31437">
    <property type="entry name" value="F31437"/>
</dbReference>
<dbReference type="SMR" id="P68470"/>
<dbReference type="GO" id="GO:0005615">
    <property type="term" value="C:extracellular space"/>
    <property type="evidence" value="ECO:0007669"/>
    <property type="project" value="UniProtKB-ARBA"/>
</dbReference>
<dbReference type="GO" id="GO:0004867">
    <property type="term" value="F:serine-type endopeptidase inhibitor activity"/>
    <property type="evidence" value="ECO:0007669"/>
    <property type="project" value="UniProtKB-KW"/>
</dbReference>
<dbReference type="CDD" id="cd00104">
    <property type="entry name" value="KAZAL_FS"/>
    <property type="match status" value="1"/>
</dbReference>
<dbReference type="FunFam" id="3.30.60.30:FF:000037">
    <property type="entry name" value="Ovomucoid"/>
    <property type="match status" value="1"/>
</dbReference>
<dbReference type="Gene3D" id="3.30.60.30">
    <property type="match status" value="1"/>
</dbReference>
<dbReference type="InterPro" id="IPR051597">
    <property type="entry name" value="Bifunctional_prot_inhibitor"/>
</dbReference>
<dbReference type="InterPro" id="IPR002350">
    <property type="entry name" value="Kazal_dom"/>
</dbReference>
<dbReference type="InterPro" id="IPR036058">
    <property type="entry name" value="Kazal_dom_sf"/>
</dbReference>
<dbReference type="InterPro" id="IPR001239">
    <property type="entry name" value="Prot_inh_Kazal-m"/>
</dbReference>
<dbReference type="PANTHER" id="PTHR47729:SF1">
    <property type="entry name" value="OVOMUCOID-LIKE-RELATED"/>
    <property type="match status" value="1"/>
</dbReference>
<dbReference type="PANTHER" id="PTHR47729">
    <property type="entry name" value="SERINE PEPTIDASE INHIBITOR, KAZAL TYPE 2, TANDEM DUPLICATE 1-RELATED"/>
    <property type="match status" value="1"/>
</dbReference>
<dbReference type="Pfam" id="PF00050">
    <property type="entry name" value="Kazal_1"/>
    <property type="match status" value="1"/>
</dbReference>
<dbReference type="PRINTS" id="PR00290">
    <property type="entry name" value="KAZALINHBTR"/>
</dbReference>
<dbReference type="SMART" id="SM00280">
    <property type="entry name" value="KAZAL"/>
    <property type="match status" value="1"/>
</dbReference>
<dbReference type="SUPFAM" id="SSF100895">
    <property type="entry name" value="Kazal-type serine protease inhibitors"/>
    <property type="match status" value="1"/>
</dbReference>
<dbReference type="PROSITE" id="PS00282">
    <property type="entry name" value="KAZAL_1"/>
    <property type="match status" value="1"/>
</dbReference>
<dbReference type="PROSITE" id="PS51465">
    <property type="entry name" value="KAZAL_2"/>
    <property type="match status" value="1"/>
</dbReference>
<organism>
    <name type="scientific">Phasianus colchicus colchicus</name>
    <name type="common">Black-necked pheasant</name>
    <dbReference type="NCBI Taxonomy" id="9057"/>
    <lineage>
        <taxon>Eukaryota</taxon>
        <taxon>Metazoa</taxon>
        <taxon>Chordata</taxon>
        <taxon>Craniata</taxon>
        <taxon>Vertebrata</taxon>
        <taxon>Euteleostomi</taxon>
        <taxon>Archelosauria</taxon>
        <taxon>Archosauria</taxon>
        <taxon>Dinosauria</taxon>
        <taxon>Saurischia</taxon>
        <taxon>Theropoda</taxon>
        <taxon>Coelurosauria</taxon>
        <taxon>Aves</taxon>
        <taxon>Neognathae</taxon>
        <taxon>Galloanserae</taxon>
        <taxon>Galliformes</taxon>
        <taxon>Phasianidae</taxon>
        <taxon>Phasianinae</taxon>
        <taxon>Phasianus</taxon>
    </lineage>
</organism>
<name>IOVO_PHACO</name>
<proteinExistence type="evidence at protein level"/>
<comment type="subcellular location">
    <subcellularLocation>
        <location>Secreted</location>
    </subcellularLocation>
</comment>
<comment type="domain">
    <text>Avian ovomucoid consists of three homologous, tandem Kazal family inhibitory domains.</text>
</comment>
<reference key="1">
    <citation type="journal article" date="1987" name="Biochemistry">
        <title>Ovomucoid third domains from 100 avian species: isolation, sequences, and hypervariability of enzyme-inhibitor contact residues.</title>
        <authorList>
            <person name="Laskowski M. Jr."/>
            <person name="Kato I."/>
            <person name="Ardelt W."/>
            <person name="Cook J."/>
            <person name="Denton A."/>
            <person name="Empie M.W."/>
            <person name="Kohr W.J."/>
            <person name="Park S.J."/>
            <person name="Parks K."/>
            <person name="Schatzley B.L."/>
            <person name="Schoenberger O.L."/>
            <person name="Tashiro M."/>
            <person name="Vichot G."/>
            <person name="Whatley H.E."/>
            <person name="Wieczorek A."/>
            <person name="Wieczorek M."/>
        </authorList>
    </citation>
    <scope>PROTEIN SEQUENCE</scope>
</reference>
<sequence>LAAVSVDCSEYPKPACTMEYRPLCGSDNKTYGNKCNFCNAVVESNGTLTLNRFGQC</sequence>
<keyword id="KW-0903">Direct protein sequencing</keyword>
<keyword id="KW-1015">Disulfide bond</keyword>
<keyword id="KW-0325">Glycoprotein</keyword>
<keyword id="KW-0646">Protease inhibitor</keyword>
<keyword id="KW-0677">Repeat</keyword>
<keyword id="KW-0964">Secreted</keyword>
<keyword id="KW-0722">Serine protease inhibitor</keyword>
<feature type="chain" id="PRO_0000073162" description="Ovomucoid">
    <location>
        <begin position="1" status="less than"/>
        <end position="56" status="greater than"/>
    </location>
</feature>
<feature type="domain" description="Kazal-like" evidence="1">
    <location>
        <begin position="6"/>
        <end position="56"/>
    </location>
</feature>
<feature type="site" description="Reactive bond 3">
    <location>
        <begin position="18"/>
        <end position="19"/>
    </location>
</feature>
<feature type="glycosylation site" description="N-linked (GlcNAc...) asparagine">
    <location>
        <position position="45"/>
    </location>
</feature>
<feature type="disulfide bond">
    <location>
        <begin position="8"/>
        <end position="38"/>
    </location>
</feature>
<feature type="disulfide bond">
    <location>
        <begin position="16"/>
        <end position="35"/>
    </location>
</feature>
<feature type="disulfide bond">
    <location>
        <begin position="24"/>
        <end position="56"/>
    </location>
</feature>
<feature type="non-terminal residue">
    <location>
        <position position="1"/>
    </location>
</feature>
<feature type="non-terminal residue">
    <location>
        <position position="56"/>
    </location>
</feature>
<evidence type="ECO:0000255" key="1">
    <source>
        <dbReference type="PROSITE-ProRule" id="PRU00798"/>
    </source>
</evidence>
<protein>
    <recommendedName>
        <fullName>Ovomucoid</fullName>
    </recommendedName>
</protein>
<accession>P68470</accession>
<accession>P05603</accession>